<gene>
    <name evidence="1" type="primary">lpxA</name>
    <name type="ordered locus">NMA0090</name>
</gene>
<sequence>MTLIHPTAVIDPKAELDSSVKVGAYTVIGPNVQIGANTEIGPHAVINGHTSIGENNRIFQFASLGEIPQDKKYRDEPTKLIIGNGNTIREFTTFNLGTVTGIGETRIGDDNWIMAYCHLAHDCVVGNHTIFANNASLAGHVTIGDYVVLGGYTLVFQFCRIGDYAMTAFAAGVHKDVPPYFMASGYRAEPAGLNSEGMRRNGFTAEQISAVKDVYKTLYHRGIPFEEAKADILRRAETQAELAVFRDFFAQSARGIIR</sequence>
<proteinExistence type="inferred from homology"/>
<comment type="function">
    <text evidence="1">Involved in the biosynthesis of lipid A, a phosphorylated glycolipid that anchors the lipopolysaccharide to the outer membrane of the cell.</text>
</comment>
<comment type="catalytic activity">
    <reaction evidence="1">
        <text>a (3R)-hydroxyacyl-[ACP] + UDP-N-acetyl-alpha-D-glucosamine = a UDP-3-O-[(3R)-3-hydroxyacyl]-N-acetyl-alpha-D-glucosamine + holo-[ACP]</text>
        <dbReference type="Rhea" id="RHEA:67812"/>
        <dbReference type="Rhea" id="RHEA-COMP:9685"/>
        <dbReference type="Rhea" id="RHEA-COMP:9945"/>
        <dbReference type="ChEBI" id="CHEBI:57705"/>
        <dbReference type="ChEBI" id="CHEBI:64479"/>
        <dbReference type="ChEBI" id="CHEBI:78827"/>
        <dbReference type="ChEBI" id="CHEBI:173225"/>
        <dbReference type="EC" id="2.3.1.129"/>
    </reaction>
</comment>
<comment type="pathway">
    <text evidence="1">Glycolipid biosynthesis; lipid IV(A) biosynthesis; lipid IV(A) from (3R)-3-hydroxytetradecanoyl-[acyl-carrier-protein] and UDP-N-acetyl-alpha-D-glucosamine: step 1/6.</text>
</comment>
<comment type="subunit">
    <text evidence="1">Homotrimer.</text>
</comment>
<comment type="subcellular location">
    <subcellularLocation>
        <location evidence="1">Cytoplasm</location>
    </subcellularLocation>
</comment>
<comment type="similarity">
    <text evidence="1">Belongs to the transferase hexapeptide repeat family. LpxA subfamily.</text>
</comment>
<keyword id="KW-0012">Acyltransferase</keyword>
<keyword id="KW-0963">Cytoplasm</keyword>
<keyword id="KW-0441">Lipid A biosynthesis</keyword>
<keyword id="KW-0444">Lipid biosynthesis</keyword>
<keyword id="KW-0443">Lipid metabolism</keyword>
<keyword id="KW-0677">Repeat</keyword>
<keyword id="KW-0808">Transferase</keyword>
<protein>
    <recommendedName>
        <fullName evidence="1">Acyl-[acyl-carrier-protein]--UDP-N-acetylglucosamine O-acyltransferase</fullName>
        <shortName evidence="1">UDP-N-acetylglucosamine acyltransferase</shortName>
        <ecNumber evidence="1">2.3.1.129</ecNumber>
    </recommendedName>
</protein>
<name>LPXA_NEIMA</name>
<evidence type="ECO:0000255" key="1">
    <source>
        <dbReference type="HAMAP-Rule" id="MF_00387"/>
    </source>
</evidence>
<feature type="chain" id="PRO_0000188054" description="Acyl-[acyl-carrier-protein]--UDP-N-acetylglucosamine O-acyltransferase">
    <location>
        <begin position="1"/>
        <end position="258"/>
    </location>
</feature>
<dbReference type="EC" id="2.3.1.129" evidence="1"/>
<dbReference type="EMBL" id="AL157959">
    <property type="protein sequence ID" value="CAM07409.1"/>
    <property type="molecule type" value="Genomic_DNA"/>
</dbReference>
<dbReference type="PIR" id="A82001">
    <property type="entry name" value="A82001"/>
</dbReference>
<dbReference type="RefSeq" id="WP_002246769.1">
    <property type="nucleotide sequence ID" value="NC_003116.1"/>
</dbReference>
<dbReference type="SMR" id="Q9JX26"/>
<dbReference type="EnsemblBacteria" id="CAM07409">
    <property type="protein sequence ID" value="CAM07409"/>
    <property type="gene ID" value="NMA0090"/>
</dbReference>
<dbReference type="GeneID" id="93387255"/>
<dbReference type="KEGG" id="nma:NMA0090"/>
<dbReference type="HOGENOM" id="CLU_061249_0_0_4"/>
<dbReference type="UniPathway" id="UPA00359">
    <property type="reaction ID" value="UER00477"/>
</dbReference>
<dbReference type="Proteomes" id="UP000000626">
    <property type="component" value="Chromosome"/>
</dbReference>
<dbReference type="GO" id="GO:0005737">
    <property type="term" value="C:cytoplasm"/>
    <property type="evidence" value="ECO:0007669"/>
    <property type="project" value="UniProtKB-SubCell"/>
</dbReference>
<dbReference type="GO" id="GO:0016020">
    <property type="term" value="C:membrane"/>
    <property type="evidence" value="ECO:0007669"/>
    <property type="project" value="GOC"/>
</dbReference>
<dbReference type="GO" id="GO:0008780">
    <property type="term" value="F:acyl-[acyl-carrier-protein]-UDP-N-acetylglucosamine O-acyltransferase activity"/>
    <property type="evidence" value="ECO:0007669"/>
    <property type="project" value="UniProtKB-UniRule"/>
</dbReference>
<dbReference type="GO" id="GO:0009245">
    <property type="term" value="P:lipid A biosynthetic process"/>
    <property type="evidence" value="ECO:0007669"/>
    <property type="project" value="UniProtKB-UniRule"/>
</dbReference>
<dbReference type="CDD" id="cd03351">
    <property type="entry name" value="LbH_UDP-GlcNAc_AT"/>
    <property type="match status" value="1"/>
</dbReference>
<dbReference type="Gene3D" id="2.160.10.10">
    <property type="entry name" value="Hexapeptide repeat proteins"/>
    <property type="match status" value="1"/>
</dbReference>
<dbReference type="Gene3D" id="1.20.1180.10">
    <property type="entry name" value="Udp N-acetylglucosamine O-acyltransferase, C-terminal domain"/>
    <property type="match status" value="1"/>
</dbReference>
<dbReference type="HAMAP" id="MF_00387">
    <property type="entry name" value="LpxA"/>
    <property type="match status" value="1"/>
</dbReference>
<dbReference type="InterPro" id="IPR029098">
    <property type="entry name" value="Acetyltransf_C"/>
</dbReference>
<dbReference type="InterPro" id="IPR037157">
    <property type="entry name" value="Acetyltransf_C_sf"/>
</dbReference>
<dbReference type="InterPro" id="IPR001451">
    <property type="entry name" value="Hexapep"/>
</dbReference>
<dbReference type="InterPro" id="IPR010137">
    <property type="entry name" value="Lipid_A_LpxA"/>
</dbReference>
<dbReference type="InterPro" id="IPR011004">
    <property type="entry name" value="Trimer_LpxA-like_sf"/>
</dbReference>
<dbReference type="NCBIfam" id="TIGR01852">
    <property type="entry name" value="lipid_A_lpxA"/>
    <property type="match status" value="1"/>
</dbReference>
<dbReference type="NCBIfam" id="NF003657">
    <property type="entry name" value="PRK05289.1"/>
    <property type="match status" value="1"/>
</dbReference>
<dbReference type="PANTHER" id="PTHR43480">
    <property type="entry name" value="ACYL-[ACYL-CARRIER-PROTEIN]--UDP-N-ACETYLGLUCOSAMINE O-ACYLTRANSFERASE"/>
    <property type="match status" value="1"/>
</dbReference>
<dbReference type="PANTHER" id="PTHR43480:SF1">
    <property type="entry name" value="ACYL-[ACYL-CARRIER-PROTEIN]--UDP-N-ACETYLGLUCOSAMINE O-ACYLTRANSFERASE, MITOCHONDRIAL-RELATED"/>
    <property type="match status" value="1"/>
</dbReference>
<dbReference type="Pfam" id="PF13720">
    <property type="entry name" value="Acetyltransf_11"/>
    <property type="match status" value="1"/>
</dbReference>
<dbReference type="Pfam" id="PF00132">
    <property type="entry name" value="Hexapep"/>
    <property type="match status" value="1"/>
</dbReference>
<dbReference type="PIRSF" id="PIRSF000456">
    <property type="entry name" value="UDP-GlcNAc_acltr"/>
    <property type="match status" value="1"/>
</dbReference>
<dbReference type="SUPFAM" id="SSF51161">
    <property type="entry name" value="Trimeric LpxA-like enzymes"/>
    <property type="match status" value="1"/>
</dbReference>
<reference key="1">
    <citation type="journal article" date="2000" name="Nature">
        <title>Complete DNA sequence of a serogroup A strain of Neisseria meningitidis Z2491.</title>
        <authorList>
            <person name="Parkhill J."/>
            <person name="Achtman M."/>
            <person name="James K.D."/>
            <person name="Bentley S.D."/>
            <person name="Churcher C.M."/>
            <person name="Klee S.R."/>
            <person name="Morelli G."/>
            <person name="Basham D."/>
            <person name="Brown D."/>
            <person name="Chillingworth T."/>
            <person name="Davies R.M."/>
            <person name="Davis P."/>
            <person name="Devlin K."/>
            <person name="Feltwell T."/>
            <person name="Hamlin N."/>
            <person name="Holroyd S."/>
            <person name="Jagels K."/>
            <person name="Leather S."/>
            <person name="Moule S."/>
            <person name="Mungall K.L."/>
            <person name="Quail M.A."/>
            <person name="Rajandream M.A."/>
            <person name="Rutherford K.M."/>
            <person name="Simmonds M."/>
            <person name="Skelton J."/>
            <person name="Whitehead S."/>
            <person name="Spratt B.G."/>
            <person name="Barrell B.G."/>
        </authorList>
    </citation>
    <scope>NUCLEOTIDE SEQUENCE [LARGE SCALE GENOMIC DNA]</scope>
    <source>
        <strain>DSM 15465 / Z2491</strain>
    </source>
</reference>
<organism>
    <name type="scientific">Neisseria meningitidis serogroup A / serotype 4A (strain DSM 15465 / Z2491)</name>
    <dbReference type="NCBI Taxonomy" id="122587"/>
    <lineage>
        <taxon>Bacteria</taxon>
        <taxon>Pseudomonadati</taxon>
        <taxon>Pseudomonadota</taxon>
        <taxon>Betaproteobacteria</taxon>
        <taxon>Neisseriales</taxon>
        <taxon>Neisseriaceae</taxon>
        <taxon>Neisseria</taxon>
    </lineage>
</organism>
<accession>Q9JX26</accession>
<accession>A1INV2</accession>